<gene>
    <name type="ordered locus">At3g23955</name>
    <name type="ORF">F14O13.14</name>
</gene>
<feature type="chain" id="PRO_0000283110" description="Putative F-box/FBD/LRR-repeat protein At3g23955">
    <location>
        <begin position="1"/>
        <end position="401"/>
    </location>
</feature>
<feature type="domain" description="F-box" evidence="1">
    <location>
        <begin position="56"/>
        <end position="102"/>
    </location>
</feature>
<feature type="repeat" description="LRR 1">
    <location>
        <begin position="128"/>
        <end position="152"/>
    </location>
</feature>
<feature type="repeat" description="LRR 2">
    <location>
        <begin position="275"/>
        <end position="296"/>
    </location>
</feature>
<feature type="domain" description="FBD">
    <location>
        <begin position="321"/>
        <end position="373"/>
    </location>
</feature>
<dbReference type="EMBL" id="AP001297">
    <property type="protein sequence ID" value="BAB03013.1"/>
    <property type="status" value="ALT_SEQ"/>
    <property type="molecule type" value="Genomic_DNA"/>
</dbReference>
<dbReference type="EMBL" id="CP002686">
    <property type="protein sequence ID" value="AEE76837.1"/>
    <property type="molecule type" value="Genomic_DNA"/>
</dbReference>
<dbReference type="RefSeq" id="NP_001154642.1">
    <molecule id="Q9LIR2-1"/>
    <property type="nucleotide sequence ID" value="NM_001161170.1"/>
</dbReference>
<dbReference type="FunCoup" id="Q9LIR2">
    <property type="interactions" value="1"/>
</dbReference>
<dbReference type="PaxDb" id="3702-AT3G23955.2"/>
<dbReference type="EnsemblPlants" id="AT3G23955.1">
    <molecule id="Q9LIR2-1"/>
    <property type="protein sequence ID" value="AT3G23955.1"/>
    <property type="gene ID" value="AT3G23955"/>
</dbReference>
<dbReference type="GeneID" id="3768912"/>
<dbReference type="Gramene" id="AT3G23955.1">
    <molecule id="Q9LIR2-1"/>
    <property type="protein sequence ID" value="AT3G23955.1"/>
    <property type="gene ID" value="AT3G23955"/>
</dbReference>
<dbReference type="KEGG" id="ath:AT3G23955"/>
<dbReference type="Araport" id="AT3G23955"/>
<dbReference type="TAIR" id="AT3G23955"/>
<dbReference type="HOGENOM" id="CLU_010721_1_3_1"/>
<dbReference type="InParanoid" id="Q9LIR2"/>
<dbReference type="PhylomeDB" id="Q9LIR2"/>
<dbReference type="PRO" id="PR:Q9LIR2"/>
<dbReference type="Proteomes" id="UP000006548">
    <property type="component" value="Chromosome 3"/>
</dbReference>
<dbReference type="ExpressionAtlas" id="Q9LIR2">
    <property type="expression patterns" value="baseline and differential"/>
</dbReference>
<dbReference type="CDD" id="cd22160">
    <property type="entry name" value="F-box_AtFBL13-like"/>
    <property type="match status" value="1"/>
</dbReference>
<dbReference type="InterPro" id="IPR036047">
    <property type="entry name" value="F-box-like_dom_sf"/>
</dbReference>
<dbReference type="InterPro" id="IPR053781">
    <property type="entry name" value="F-box_AtFBL13-like"/>
</dbReference>
<dbReference type="InterPro" id="IPR001810">
    <property type="entry name" value="F-box_dom"/>
</dbReference>
<dbReference type="InterPro" id="IPR006566">
    <property type="entry name" value="FBD"/>
</dbReference>
<dbReference type="InterPro" id="IPR050232">
    <property type="entry name" value="FBL13/AtMIF1-like"/>
</dbReference>
<dbReference type="PANTHER" id="PTHR31900">
    <property type="entry name" value="F-BOX/RNI SUPERFAMILY PROTEIN-RELATED"/>
    <property type="match status" value="1"/>
</dbReference>
<dbReference type="PANTHER" id="PTHR31900:SF25">
    <property type="entry name" value="FBD DOMAIN-CONTAINING PROTEIN"/>
    <property type="match status" value="1"/>
</dbReference>
<dbReference type="Pfam" id="PF00646">
    <property type="entry name" value="F-box"/>
    <property type="match status" value="1"/>
</dbReference>
<dbReference type="Pfam" id="PF08387">
    <property type="entry name" value="FBD"/>
    <property type="match status" value="1"/>
</dbReference>
<dbReference type="SMART" id="SM00579">
    <property type="entry name" value="FBD"/>
    <property type="match status" value="1"/>
</dbReference>
<dbReference type="SUPFAM" id="SSF81383">
    <property type="entry name" value="F-box domain"/>
    <property type="match status" value="1"/>
</dbReference>
<dbReference type="PROSITE" id="PS50181">
    <property type="entry name" value="FBOX"/>
    <property type="match status" value="1"/>
</dbReference>
<protein>
    <recommendedName>
        <fullName>Putative F-box/FBD/LRR-repeat protein At3g23955</fullName>
    </recommendedName>
</protein>
<accession>Q9LIR2</accession>
<name>FDL17_ARATH</name>
<comment type="alternative products">
    <event type="alternative splicing"/>
    <isoform>
        <id>Q9LIR2-1</id>
        <name>1</name>
        <sequence type="displayed"/>
    </isoform>
    <text>A number of isoforms are produced. According to EST sequences.</text>
</comment>
<comment type="sequence caution" evidence="2">
    <conflict type="erroneous gene model prediction">
        <sequence resource="EMBL-CDS" id="BAB03013"/>
    </conflict>
</comment>
<sequence length="401" mass="46624">MDHEDVTRRAVEKKNKLASSLIHAPFAICGLCWAFVYQKLIYKQTYTDTHARNYKVPARFQLPDPLLTQILNHLPTEEAVKTSVLSTRWRTLWLWVHNLELSFSKFSSFNAFLSFGNWFFDSDRVSCIESLKLSLDGNDASYLKPWIDAFVKRKIQRLHVRLTQGCEMPLSLYRLVSSCPVLEELKIDVVWMDGRVYRVHSRSLKSFILTDLESDAKFDISLRFHKWVFNEAKTSTIHMFLAWISRVRDMTICAQTFKLIHHYSESVQLPQFGYMSSLYITLNASDLKWFPIFLRSIPNLKSLILVMERTGSSHQLSPKAIKRVSISSVPECLLSSLEFVEFKAPICGLAPEMMLVWYFLENSPTLKKLTLRLKSHSTKDDFVKKLLKIPRCSTECEVIFL</sequence>
<organism>
    <name type="scientific">Arabidopsis thaliana</name>
    <name type="common">Mouse-ear cress</name>
    <dbReference type="NCBI Taxonomy" id="3702"/>
    <lineage>
        <taxon>Eukaryota</taxon>
        <taxon>Viridiplantae</taxon>
        <taxon>Streptophyta</taxon>
        <taxon>Embryophyta</taxon>
        <taxon>Tracheophyta</taxon>
        <taxon>Spermatophyta</taxon>
        <taxon>Magnoliopsida</taxon>
        <taxon>eudicotyledons</taxon>
        <taxon>Gunneridae</taxon>
        <taxon>Pentapetalae</taxon>
        <taxon>rosids</taxon>
        <taxon>malvids</taxon>
        <taxon>Brassicales</taxon>
        <taxon>Brassicaceae</taxon>
        <taxon>Camelineae</taxon>
        <taxon>Arabidopsis</taxon>
    </lineage>
</organism>
<reference key="1">
    <citation type="journal article" date="2000" name="DNA Res.">
        <title>Structural analysis of Arabidopsis thaliana chromosome 3. II. Sequence features of the 4,251,695 bp regions covered by 90 P1, TAC and BAC clones.</title>
        <authorList>
            <person name="Kaneko T."/>
            <person name="Katoh T."/>
            <person name="Sato S."/>
            <person name="Nakamura Y."/>
            <person name="Asamizu E."/>
            <person name="Tabata S."/>
        </authorList>
    </citation>
    <scope>NUCLEOTIDE SEQUENCE [LARGE SCALE GENOMIC DNA]</scope>
    <source>
        <strain>cv. Columbia</strain>
    </source>
</reference>
<reference key="2">
    <citation type="journal article" date="2017" name="Plant J.">
        <title>Araport11: a complete reannotation of the Arabidopsis thaliana reference genome.</title>
        <authorList>
            <person name="Cheng C.Y."/>
            <person name="Krishnakumar V."/>
            <person name="Chan A.P."/>
            <person name="Thibaud-Nissen F."/>
            <person name="Schobel S."/>
            <person name="Town C.D."/>
        </authorList>
    </citation>
    <scope>GENOME REANNOTATION</scope>
    <source>
        <strain>cv. Columbia</strain>
    </source>
</reference>
<evidence type="ECO:0000255" key="1">
    <source>
        <dbReference type="PROSITE-ProRule" id="PRU00080"/>
    </source>
</evidence>
<evidence type="ECO:0000305" key="2"/>
<keyword id="KW-0025">Alternative splicing</keyword>
<keyword id="KW-0433">Leucine-rich repeat</keyword>
<keyword id="KW-1185">Reference proteome</keyword>
<keyword id="KW-0677">Repeat</keyword>
<proteinExistence type="predicted"/>